<proteinExistence type="inferred from homology"/>
<protein>
    <recommendedName>
        <fullName evidence="1">Large ribosomal subunit protein uL3</fullName>
    </recommendedName>
    <alternativeName>
        <fullName evidence="3">50S ribosomal protein L3</fullName>
    </alternativeName>
</protein>
<name>RL3_STAA1</name>
<sequence>MTKGILGRKIGMTQVFGENGELIPVTVVEAKENVVLQKKTVEVDGYNAIQVGFEDKKAYKKDAKSNKYANKPAEGHAKKADAAPKRFIREFRNVDVDAYEVGQEVSVDTFVAGDVIDVTGVSKGKGFQGAIKRHGQSRGPMSHGSHFHRAPGSVGMASDASRVFKGQKMPGRMGGNTVTVQNLEVVQVDTENKVILVKGNVPGPKKGLVEIRTSIKKGNK</sequence>
<organism>
    <name type="scientific">Staphylococcus aureus (strain Mu3 / ATCC 700698)</name>
    <dbReference type="NCBI Taxonomy" id="418127"/>
    <lineage>
        <taxon>Bacteria</taxon>
        <taxon>Bacillati</taxon>
        <taxon>Bacillota</taxon>
        <taxon>Bacilli</taxon>
        <taxon>Bacillales</taxon>
        <taxon>Staphylococcaceae</taxon>
        <taxon>Staphylococcus</taxon>
    </lineage>
</organism>
<feature type="chain" id="PRO_1000052148" description="Large ribosomal subunit protein uL3">
    <location>
        <begin position="1"/>
        <end position="220"/>
    </location>
</feature>
<feature type="region of interest" description="Disordered" evidence="2">
    <location>
        <begin position="130"/>
        <end position="156"/>
    </location>
</feature>
<evidence type="ECO:0000255" key="1">
    <source>
        <dbReference type="HAMAP-Rule" id="MF_01325"/>
    </source>
</evidence>
<evidence type="ECO:0000256" key="2">
    <source>
        <dbReference type="SAM" id="MobiDB-lite"/>
    </source>
</evidence>
<evidence type="ECO:0000305" key="3"/>
<accession>A7X5G3</accession>
<keyword id="KW-0687">Ribonucleoprotein</keyword>
<keyword id="KW-0689">Ribosomal protein</keyword>
<keyword id="KW-0694">RNA-binding</keyword>
<keyword id="KW-0699">rRNA-binding</keyword>
<dbReference type="EMBL" id="AP009324">
    <property type="protein sequence ID" value="BAF79117.1"/>
    <property type="molecule type" value="Genomic_DNA"/>
</dbReference>
<dbReference type="RefSeq" id="WP_000160212.1">
    <property type="nucleotide sequence ID" value="NC_009782.1"/>
</dbReference>
<dbReference type="SMR" id="A7X5G3"/>
<dbReference type="GeneID" id="98346562"/>
<dbReference type="KEGG" id="saw:SAHV_2234"/>
<dbReference type="HOGENOM" id="CLU_044142_4_1_9"/>
<dbReference type="GO" id="GO:0022625">
    <property type="term" value="C:cytosolic large ribosomal subunit"/>
    <property type="evidence" value="ECO:0007669"/>
    <property type="project" value="TreeGrafter"/>
</dbReference>
<dbReference type="GO" id="GO:0019843">
    <property type="term" value="F:rRNA binding"/>
    <property type="evidence" value="ECO:0007669"/>
    <property type="project" value="UniProtKB-UniRule"/>
</dbReference>
<dbReference type="GO" id="GO:0003735">
    <property type="term" value="F:structural constituent of ribosome"/>
    <property type="evidence" value="ECO:0007669"/>
    <property type="project" value="InterPro"/>
</dbReference>
<dbReference type="GO" id="GO:0006412">
    <property type="term" value="P:translation"/>
    <property type="evidence" value="ECO:0007669"/>
    <property type="project" value="UniProtKB-UniRule"/>
</dbReference>
<dbReference type="FunFam" id="2.40.30.10:FF:000004">
    <property type="entry name" value="50S ribosomal protein L3"/>
    <property type="match status" value="1"/>
</dbReference>
<dbReference type="FunFam" id="3.30.160.810:FF:000002">
    <property type="entry name" value="50S ribosomal protein L3"/>
    <property type="match status" value="1"/>
</dbReference>
<dbReference type="Gene3D" id="3.30.160.810">
    <property type="match status" value="1"/>
</dbReference>
<dbReference type="Gene3D" id="2.40.30.10">
    <property type="entry name" value="Translation factors"/>
    <property type="match status" value="1"/>
</dbReference>
<dbReference type="HAMAP" id="MF_01325_B">
    <property type="entry name" value="Ribosomal_uL3_B"/>
    <property type="match status" value="1"/>
</dbReference>
<dbReference type="InterPro" id="IPR000597">
    <property type="entry name" value="Ribosomal_uL3"/>
</dbReference>
<dbReference type="InterPro" id="IPR019927">
    <property type="entry name" value="Ribosomal_uL3_bac/org-type"/>
</dbReference>
<dbReference type="InterPro" id="IPR019926">
    <property type="entry name" value="Ribosomal_uL3_CS"/>
</dbReference>
<dbReference type="InterPro" id="IPR009000">
    <property type="entry name" value="Transl_B-barrel_sf"/>
</dbReference>
<dbReference type="NCBIfam" id="TIGR03625">
    <property type="entry name" value="L3_bact"/>
    <property type="match status" value="1"/>
</dbReference>
<dbReference type="PANTHER" id="PTHR11229">
    <property type="entry name" value="50S RIBOSOMAL PROTEIN L3"/>
    <property type="match status" value="1"/>
</dbReference>
<dbReference type="PANTHER" id="PTHR11229:SF16">
    <property type="entry name" value="LARGE RIBOSOMAL SUBUNIT PROTEIN UL3C"/>
    <property type="match status" value="1"/>
</dbReference>
<dbReference type="Pfam" id="PF00297">
    <property type="entry name" value="Ribosomal_L3"/>
    <property type="match status" value="1"/>
</dbReference>
<dbReference type="SUPFAM" id="SSF50447">
    <property type="entry name" value="Translation proteins"/>
    <property type="match status" value="1"/>
</dbReference>
<dbReference type="PROSITE" id="PS00474">
    <property type="entry name" value="RIBOSOMAL_L3"/>
    <property type="match status" value="1"/>
</dbReference>
<comment type="function">
    <text evidence="1">One of the primary rRNA binding proteins, it binds directly near the 3'-end of the 23S rRNA, where it nucleates assembly of the 50S subunit.</text>
</comment>
<comment type="subunit">
    <text evidence="1">Part of the 50S ribosomal subunit. Forms a cluster with proteins L14 and L19.</text>
</comment>
<comment type="similarity">
    <text evidence="1">Belongs to the universal ribosomal protein uL3 family.</text>
</comment>
<reference key="1">
    <citation type="journal article" date="2008" name="Antimicrob. Agents Chemother.">
        <title>Mutated response regulator graR is responsible for phenotypic conversion of Staphylococcus aureus from heterogeneous vancomycin-intermediate resistance to vancomycin-intermediate resistance.</title>
        <authorList>
            <person name="Neoh H.-M."/>
            <person name="Cui L."/>
            <person name="Yuzawa H."/>
            <person name="Takeuchi F."/>
            <person name="Matsuo M."/>
            <person name="Hiramatsu K."/>
        </authorList>
    </citation>
    <scope>NUCLEOTIDE SEQUENCE [LARGE SCALE GENOMIC DNA]</scope>
    <source>
        <strain>Mu3 / ATCC 700698</strain>
    </source>
</reference>
<gene>
    <name evidence="1" type="primary">rplC</name>
    <name type="ordered locus">SAHV_2234</name>
</gene>